<reference key="1">
    <citation type="journal article" date="2007" name="PLoS Genet.">
        <title>Patterns and implications of gene gain and loss in the evolution of Prochlorococcus.</title>
        <authorList>
            <person name="Kettler G.C."/>
            <person name="Martiny A.C."/>
            <person name="Huang K."/>
            <person name="Zucker J."/>
            <person name="Coleman M.L."/>
            <person name="Rodrigue S."/>
            <person name="Chen F."/>
            <person name="Lapidus A."/>
            <person name="Ferriera S."/>
            <person name="Johnson J."/>
            <person name="Steglich C."/>
            <person name="Church G.M."/>
            <person name="Richardson P."/>
            <person name="Chisholm S.W."/>
        </authorList>
    </citation>
    <scope>NUCLEOTIDE SEQUENCE [LARGE SCALE GENOMIC DNA]</scope>
    <source>
        <strain>NATL1A</strain>
    </source>
</reference>
<dbReference type="EMBL" id="CP000553">
    <property type="protein sequence ID" value="ABM76531.1"/>
    <property type="molecule type" value="Genomic_DNA"/>
</dbReference>
<dbReference type="RefSeq" id="WP_011824496.1">
    <property type="nucleotide sequence ID" value="NC_008819.1"/>
</dbReference>
<dbReference type="SMR" id="A2C4X1"/>
<dbReference type="KEGG" id="pme:NATL1_19751"/>
<dbReference type="eggNOG" id="COG0216">
    <property type="taxonomic scope" value="Bacteria"/>
</dbReference>
<dbReference type="HOGENOM" id="CLU_036856_0_1_3"/>
<dbReference type="Proteomes" id="UP000002592">
    <property type="component" value="Chromosome"/>
</dbReference>
<dbReference type="GO" id="GO:0005737">
    <property type="term" value="C:cytoplasm"/>
    <property type="evidence" value="ECO:0007669"/>
    <property type="project" value="UniProtKB-SubCell"/>
</dbReference>
<dbReference type="GO" id="GO:0016149">
    <property type="term" value="F:translation release factor activity, codon specific"/>
    <property type="evidence" value="ECO:0007669"/>
    <property type="project" value="UniProtKB-UniRule"/>
</dbReference>
<dbReference type="FunFam" id="3.30.160.20:FF:000004">
    <property type="entry name" value="Peptide chain release factor 1"/>
    <property type="match status" value="1"/>
</dbReference>
<dbReference type="FunFam" id="3.30.70.1660:FF:000002">
    <property type="entry name" value="Peptide chain release factor 1"/>
    <property type="match status" value="1"/>
</dbReference>
<dbReference type="Gene3D" id="3.30.160.20">
    <property type="match status" value="1"/>
</dbReference>
<dbReference type="Gene3D" id="3.30.70.1660">
    <property type="match status" value="1"/>
</dbReference>
<dbReference type="Gene3D" id="6.10.140.1950">
    <property type="match status" value="1"/>
</dbReference>
<dbReference type="HAMAP" id="MF_00093">
    <property type="entry name" value="Rel_fac_1"/>
    <property type="match status" value="1"/>
</dbReference>
<dbReference type="InterPro" id="IPR005139">
    <property type="entry name" value="PCRF"/>
</dbReference>
<dbReference type="InterPro" id="IPR000352">
    <property type="entry name" value="Pep_chain_release_fac_I"/>
</dbReference>
<dbReference type="InterPro" id="IPR045853">
    <property type="entry name" value="Pep_chain_release_fac_I_sf"/>
</dbReference>
<dbReference type="InterPro" id="IPR050057">
    <property type="entry name" value="Prokaryotic/Mito_RF"/>
</dbReference>
<dbReference type="InterPro" id="IPR004373">
    <property type="entry name" value="RF-1"/>
</dbReference>
<dbReference type="NCBIfam" id="TIGR00019">
    <property type="entry name" value="prfA"/>
    <property type="match status" value="1"/>
</dbReference>
<dbReference type="NCBIfam" id="NF001859">
    <property type="entry name" value="PRK00591.1"/>
    <property type="match status" value="1"/>
</dbReference>
<dbReference type="PANTHER" id="PTHR43804">
    <property type="entry name" value="LD18447P"/>
    <property type="match status" value="1"/>
</dbReference>
<dbReference type="PANTHER" id="PTHR43804:SF8">
    <property type="entry name" value="PEPTIDE CHAIN RELEASE FACTOR APG3, CHLOROPLASTIC"/>
    <property type="match status" value="1"/>
</dbReference>
<dbReference type="Pfam" id="PF03462">
    <property type="entry name" value="PCRF"/>
    <property type="match status" value="1"/>
</dbReference>
<dbReference type="Pfam" id="PF00472">
    <property type="entry name" value="RF-1"/>
    <property type="match status" value="1"/>
</dbReference>
<dbReference type="SMART" id="SM00937">
    <property type="entry name" value="PCRF"/>
    <property type="match status" value="1"/>
</dbReference>
<dbReference type="SUPFAM" id="SSF75620">
    <property type="entry name" value="Release factor"/>
    <property type="match status" value="1"/>
</dbReference>
<dbReference type="PROSITE" id="PS00745">
    <property type="entry name" value="RF_PROK_I"/>
    <property type="match status" value="1"/>
</dbReference>
<accession>A2C4X1</accession>
<gene>
    <name evidence="1" type="primary">prfA</name>
    <name type="ordered locus">NATL1_19751</name>
</gene>
<name>RF1_PROM1</name>
<evidence type="ECO:0000255" key="1">
    <source>
        <dbReference type="HAMAP-Rule" id="MF_00093"/>
    </source>
</evidence>
<protein>
    <recommendedName>
        <fullName evidence="1">Peptide chain release factor 1</fullName>
        <shortName evidence="1">RF-1</shortName>
    </recommendedName>
</protein>
<keyword id="KW-0963">Cytoplasm</keyword>
<keyword id="KW-0488">Methylation</keyword>
<keyword id="KW-0648">Protein biosynthesis</keyword>
<sequence length="365" mass="40976">MDSSTLIKRLETAKSSFQNLELQLADPDVASDPKQLETIARERSRLEPLVNDYLKLQIIEKECLEAKGLVKESRDDKEMELLAREELQNLELSKNELIQKLTLALLPKDPRDERSVMLEIRAGAGGNEACLWAGDLARMYERYGQKLGWNVKPISSTEADMGGFREMIISVKGESVYSQLKFEAGVHRVQRVPSTESQGRVHTSTATVAVMPEADPVEVKIESTDLEISTARSGGAGGQNVNKVETAIDLFHKPSGIRVFCTQERSQMQNRERAMEILRAKLLELEIAEANAKERSARLSQVGTGDRSEKIRTYNYKDNRTTDHRLGVNFPLEQVLSGQLEDVIGACIAEEQKRQMEELSNQSED</sequence>
<comment type="function">
    <text evidence="1">Peptide chain release factor 1 directs the termination of translation in response to the peptide chain termination codons UAG and UAA.</text>
</comment>
<comment type="subcellular location">
    <subcellularLocation>
        <location evidence="1">Cytoplasm</location>
    </subcellularLocation>
</comment>
<comment type="PTM">
    <text evidence="1">Methylated by PrmC. Methylation increases the termination efficiency of RF1.</text>
</comment>
<comment type="similarity">
    <text evidence="1">Belongs to the prokaryotic/mitochondrial release factor family.</text>
</comment>
<feature type="chain" id="PRO_1000093486" description="Peptide chain release factor 1">
    <location>
        <begin position="1"/>
        <end position="365"/>
    </location>
</feature>
<feature type="modified residue" description="N5-methylglutamine" evidence="1">
    <location>
        <position position="239"/>
    </location>
</feature>
<proteinExistence type="inferred from homology"/>
<organism>
    <name type="scientific">Prochlorococcus marinus (strain NATL1A)</name>
    <dbReference type="NCBI Taxonomy" id="167555"/>
    <lineage>
        <taxon>Bacteria</taxon>
        <taxon>Bacillati</taxon>
        <taxon>Cyanobacteriota</taxon>
        <taxon>Cyanophyceae</taxon>
        <taxon>Synechococcales</taxon>
        <taxon>Prochlorococcaceae</taxon>
        <taxon>Prochlorococcus</taxon>
    </lineage>
</organism>